<accession>Q0UJ25</accession>
<keyword id="KW-0131">Cell cycle</keyword>
<keyword id="KW-0227">DNA damage</keyword>
<keyword id="KW-0234">DNA repair</keyword>
<keyword id="KW-0236">DNA replication inhibitor</keyword>
<keyword id="KW-0469">Meiosis</keyword>
<keyword id="KW-0539">Nucleus</keyword>
<gene>
    <name type="primary">CSM3</name>
    <name type="ORF">SNOG_08239</name>
</gene>
<evidence type="ECO:0000250" key="1"/>
<evidence type="ECO:0000256" key="2">
    <source>
        <dbReference type="SAM" id="MobiDB-lite"/>
    </source>
</evidence>
<evidence type="ECO:0000305" key="3"/>
<dbReference type="EMBL" id="CH445336">
    <property type="protein sequence ID" value="EAT84515.1"/>
    <property type="molecule type" value="Genomic_DNA"/>
</dbReference>
<dbReference type="RefSeq" id="XP_001798561.1">
    <property type="nucleotide sequence ID" value="XM_001798509.1"/>
</dbReference>
<dbReference type="FunCoup" id="Q0UJ25">
    <property type="interactions" value="205"/>
</dbReference>
<dbReference type="STRING" id="321614.Q0UJ25"/>
<dbReference type="EnsemblFungi" id="SNOT_08239">
    <property type="protein sequence ID" value="SNOT_08239"/>
    <property type="gene ID" value="SNOG_08239"/>
</dbReference>
<dbReference type="GeneID" id="5975459"/>
<dbReference type="KEGG" id="pno:SNOG_08239"/>
<dbReference type="VEuPathDB" id="FungiDB:JI435_082390"/>
<dbReference type="eggNOG" id="KOG3004">
    <property type="taxonomic scope" value="Eukaryota"/>
</dbReference>
<dbReference type="HOGENOM" id="CLU_036204_0_0_1"/>
<dbReference type="InParanoid" id="Q0UJ25"/>
<dbReference type="OMA" id="ADMDDMW"/>
<dbReference type="OrthoDB" id="437078at2759"/>
<dbReference type="Proteomes" id="UP000001055">
    <property type="component" value="Unassembled WGS sequence"/>
</dbReference>
<dbReference type="GO" id="GO:0031298">
    <property type="term" value="C:replication fork protection complex"/>
    <property type="evidence" value="ECO:0000318"/>
    <property type="project" value="GO_Central"/>
</dbReference>
<dbReference type="GO" id="GO:0003677">
    <property type="term" value="F:DNA binding"/>
    <property type="evidence" value="ECO:0000318"/>
    <property type="project" value="GO_Central"/>
</dbReference>
<dbReference type="GO" id="GO:0006281">
    <property type="term" value="P:DNA repair"/>
    <property type="evidence" value="ECO:0007669"/>
    <property type="project" value="UniProtKB-KW"/>
</dbReference>
<dbReference type="GO" id="GO:0000076">
    <property type="term" value="P:DNA replication checkpoint signaling"/>
    <property type="evidence" value="ECO:0000318"/>
    <property type="project" value="GO_Central"/>
</dbReference>
<dbReference type="GO" id="GO:0051321">
    <property type="term" value="P:meiotic cell cycle"/>
    <property type="evidence" value="ECO:0007669"/>
    <property type="project" value="UniProtKB-KW"/>
</dbReference>
<dbReference type="GO" id="GO:0043111">
    <property type="term" value="P:replication fork arrest"/>
    <property type="evidence" value="ECO:0000318"/>
    <property type="project" value="GO_Central"/>
</dbReference>
<dbReference type="GO" id="GO:0031297">
    <property type="term" value="P:replication fork processing"/>
    <property type="evidence" value="ECO:0007669"/>
    <property type="project" value="InterPro"/>
</dbReference>
<dbReference type="InterPro" id="IPR012923">
    <property type="entry name" value="Csm3"/>
</dbReference>
<dbReference type="InterPro" id="IPR040038">
    <property type="entry name" value="TIPIN/Csm3/Swi3"/>
</dbReference>
<dbReference type="PANTHER" id="PTHR13220">
    <property type="entry name" value="TIMELESS INTERACTING-RELATED"/>
    <property type="match status" value="1"/>
</dbReference>
<dbReference type="PANTHER" id="PTHR13220:SF11">
    <property type="entry name" value="TIMELESS-INTERACTING PROTEIN"/>
    <property type="match status" value="1"/>
</dbReference>
<dbReference type="Pfam" id="PF07962">
    <property type="entry name" value="Swi3"/>
    <property type="match status" value="1"/>
</dbReference>
<name>CSM3_PHANO</name>
<protein>
    <recommendedName>
        <fullName>Chromosome segregation in meiosis protein 3</fullName>
    </recommendedName>
</protein>
<sequence length="244" mass="27127">MAPSRANTPSDDELDNILNGITEGRDISGTQAESTRPAYASKGSGNAGDGLGIDEEIIITKKRIPIPKLDDNRLLSDPGIPRLRRISKDRLRFKGKGHEYGDIARMLNMYQLWLDDLYPRAKFADALTIIEKVGHTKRMQMMRKEWIDEGKPRRTSAYEEEDADEVVVQAPTTEQATESMEGVEQGEEGAERAGPDEDELDALLAESAQQNTSAPKTLPVRTAGGEDDPFADEMEAMVDMEDMW</sequence>
<proteinExistence type="inferred from homology"/>
<reference key="1">
    <citation type="journal article" date="2007" name="Plant Cell">
        <title>Dothideomycete-plant interactions illuminated by genome sequencing and EST analysis of the wheat pathogen Stagonospora nodorum.</title>
        <authorList>
            <person name="Hane J.K."/>
            <person name="Lowe R.G.T."/>
            <person name="Solomon P.S."/>
            <person name="Tan K.-C."/>
            <person name="Schoch C.L."/>
            <person name="Spatafora J.W."/>
            <person name="Crous P.W."/>
            <person name="Kodira C.D."/>
            <person name="Birren B.W."/>
            <person name="Galagan J.E."/>
            <person name="Torriani S.F.F."/>
            <person name="McDonald B.A."/>
            <person name="Oliver R.P."/>
        </authorList>
    </citation>
    <scope>NUCLEOTIDE SEQUENCE [LARGE SCALE GENOMIC DNA]</scope>
    <source>
        <strain>SN15 / ATCC MYA-4574 / FGSC 10173</strain>
    </source>
</reference>
<organism>
    <name type="scientific">Phaeosphaeria nodorum (strain SN15 / ATCC MYA-4574 / FGSC 10173)</name>
    <name type="common">Glume blotch fungus</name>
    <name type="synonym">Parastagonospora nodorum</name>
    <dbReference type="NCBI Taxonomy" id="321614"/>
    <lineage>
        <taxon>Eukaryota</taxon>
        <taxon>Fungi</taxon>
        <taxon>Dikarya</taxon>
        <taxon>Ascomycota</taxon>
        <taxon>Pezizomycotina</taxon>
        <taxon>Dothideomycetes</taxon>
        <taxon>Pleosporomycetidae</taxon>
        <taxon>Pleosporales</taxon>
        <taxon>Pleosporineae</taxon>
        <taxon>Phaeosphaeriaceae</taxon>
        <taxon>Parastagonospora</taxon>
    </lineage>
</organism>
<comment type="function">
    <text evidence="1">Forms a fork protection complex (FPC) with TOF1 and which is required for chromosome segregation during meiosis and DNA damage repair. FPC coordinates leading and lagging strand synthesis and moves with the replication fork. FPC stabilizes replication forks in a configuration that is recognized by replication checkpoint sensors (By similarity).</text>
</comment>
<comment type="subunit">
    <text evidence="1">Component of the fork protection complex (FPC) consisting of TOF1 and CSM3.</text>
</comment>
<comment type="subcellular location">
    <subcellularLocation>
        <location evidence="1">Nucleus</location>
    </subcellularLocation>
</comment>
<comment type="similarity">
    <text evidence="3">Belongs to the CSM3 family.</text>
</comment>
<feature type="chain" id="PRO_0000301723" description="Chromosome segregation in meiosis protein 3">
    <location>
        <begin position="1"/>
        <end position="244"/>
    </location>
</feature>
<feature type="region of interest" description="Disordered" evidence="2">
    <location>
        <begin position="1"/>
        <end position="47"/>
    </location>
</feature>
<feature type="region of interest" description="Disordered" evidence="2">
    <location>
        <begin position="172"/>
        <end position="229"/>
    </location>
</feature>